<keyword id="KW-0028">Amino-acid biosynthesis</keyword>
<keyword id="KW-0055">Arginine biosynthesis</keyword>
<keyword id="KW-0067">ATP-binding</keyword>
<keyword id="KW-0963">Cytoplasm</keyword>
<keyword id="KW-0436">Ligase</keyword>
<keyword id="KW-0547">Nucleotide-binding</keyword>
<keyword id="KW-1185">Reference proteome</keyword>
<feature type="chain" id="PRO_0000148647" description="Argininosuccinate synthase">
    <location>
        <begin position="1"/>
        <end position="396"/>
    </location>
</feature>
<feature type="binding site" evidence="1">
    <location>
        <begin position="9"/>
        <end position="17"/>
    </location>
    <ligand>
        <name>ATP</name>
        <dbReference type="ChEBI" id="CHEBI:30616"/>
    </ligand>
</feature>
<feature type="binding site" evidence="1">
    <location>
        <position position="85"/>
    </location>
    <ligand>
        <name>L-citrulline</name>
        <dbReference type="ChEBI" id="CHEBI:57743"/>
    </ligand>
</feature>
<feature type="binding site" evidence="1">
    <location>
        <position position="115"/>
    </location>
    <ligand>
        <name>ATP</name>
        <dbReference type="ChEBI" id="CHEBI:30616"/>
    </ligand>
</feature>
<feature type="binding site" evidence="1">
    <location>
        <position position="117"/>
    </location>
    <ligand>
        <name>L-aspartate</name>
        <dbReference type="ChEBI" id="CHEBI:29991"/>
    </ligand>
</feature>
<feature type="binding site" evidence="1">
    <location>
        <position position="121"/>
    </location>
    <ligand>
        <name>L-aspartate</name>
        <dbReference type="ChEBI" id="CHEBI:29991"/>
    </ligand>
</feature>
<feature type="binding site" evidence="1">
    <location>
        <position position="121"/>
    </location>
    <ligand>
        <name>L-citrulline</name>
        <dbReference type="ChEBI" id="CHEBI:57743"/>
    </ligand>
</feature>
<feature type="binding site" evidence="1">
    <location>
        <position position="122"/>
    </location>
    <ligand>
        <name>L-aspartate</name>
        <dbReference type="ChEBI" id="CHEBI:29991"/>
    </ligand>
</feature>
<feature type="binding site" evidence="1">
    <location>
        <position position="125"/>
    </location>
    <ligand>
        <name>L-citrulline</name>
        <dbReference type="ChEBI" id="CHEBI:57743"/>
    </ligand>
</feature>
<feature type="binding site" evidence="1">
    <location>
        <position position="173"/>
    </location>
    <ligand>
        <name>L-citrulline</name>
        <dbReference type="ChEBI" id="CHEBI:57743"/>
    </ligand>
</feature>
<feature type="binding site" evidence="1">
    <location>
        <position position="258"/>
    </location>
    <ligand>
        <name>L-citrulline</name>
        <dbReference type="ChEBI" id="CHEBI:57743"/>
    </ligand>
</feature>
<feature type="binding site" evidence="1">
    <location>
        <position position="270"/>
    </location>
    <ligand>
        <name>L-citrulline</name>
        <dbReference type="ChEBI" id="CHEBI:57743"/>
    </ligand>
</feature>
<reference key="1">
    <citation type="journal article" date="2002" name="Proc. Natl. Acad. Sci. U.S.A.">
        <title>Genome sequence of Streptococcus mutans UA159, a cariogenic dental pathogen.</title>
        <authorList>
            <person name="Ajdic D.J."/>
            <person name="McShan W.M."/>
            <person name="McLaughlin R.E."/>
            <person name="Savic G."/>
            <person name="Chang J."/>
            <person name="Carson M.B."/>
            <person name="Primeaux C."/>
            <person name="Tian R."/>
            <person name="Kenton S."/>
            <person name="Jia H.G."/>
            <person name="Lin S.P."/>
            <person name="Qian Y."/>
            <person name="Li S."/>
            <person name="Zhu H."/>
            <person name="Najar F.Z."/>
            <person name="Lai H."/>
            <person name="White J."/>
            <person name="Roe B.A."/>
            <person name="Ferretti J.J."/>
        </authorList>
    </citation>
    <scope>NUCLEOTIDE SEQUENCE [LARGE SCALE GENOMIC DNA]</scope>
    <source>
        <strain>ATCC 700610 / UA159</strain>
    </source>
</reference>
<dbReference type="EC" id="6.3.4.5" evidence="1"/>
<dbReference type="EMBL" id="AE014133">
    <property type="protein sequence ID" value="AAN58093.1"/>
    <property type="molecule type" value="Genomic_DNA"/>
</dbReference>
<dbReference type="RefSeq" id="NP_720787.1">
    <property type="nucleotide sequence ID" value="NC_004350.2"/>
</dbReference>
<dbReference type="RefSeq" id="WP_002262513.1">
    <property type="nucleotide sequence ID" value="NC_004350.2"/>
</dbReference>
<dbReference type="SMR" id="Q8CWZ0"/>
<dbReference type="STRING" id="210007.SMU_334"/>
<dbReference type="KEGG" id="smu:SMU_334"/>
<dbReference type="PATRIC" id="fig|210007.7.peg.289"/>
<dbReference type="eggNOG" id="COG0137">
    <property type="taxonomic scope" value="Bacteria"/>
</dbReference>
<dbReference type="HOGENOM" id="CLU_032784_4_2_9"/>
<dbReference type="OrthoDB" id="9801641at2"/>
<dbReference type="PhylomeDB" id="Q8CWZ0"/>
<dbReference type="UniPathway" id="UPA00068">
    <property type="reaction ID" value="UER00113"/>
</dbReference>
<dbReference type="Proteomes" id="UP000002512">
    <property type="component" value="Chromosome"/>
</dbReference>
<dbReference type="GO" id="GO:0005737">
    <property type="term" value="C:cytoplasm"/>
    <property type="evidence" value="ECO:0007669"/>
    <property type="project" value="UniProtKB-SubCell"/>
</dbReference>
<dbReference type="GO" id="GO:0004055">
    <property type="term" value="F:argininosuccinate synthase activity"/>
    <property type="evidence" value="ECO:0007669"/>
    <property type="project" value="UniProtKB-UniRule"/>
</dbReference>
<dbReference type="GO" id="GO:0005524">
    <property type="term" value="F:ATP binding"/>
    <property type="evidence" value="ECO:0007669"/>
    <property type="project" value="UniProtKB-UniRule"/>
</dbReference>
<dbReference type="GO" id="GO:0000053">
    <property type="term" value="P:argininosuccinate metabolic process"/>
    <property type="evidence" value="ECO:0007669"/>
    <property type="project" value="TreeGrafter"/>
</dbReference>
<dbReference type="GO" id="GO:0006526">
    <property type="term" value="P:L-arginine biosynthetic process"/>
    <property type="evidence" value="ECO:0007669"/>
    <property type="project" value="UniProtKB-UniRule"/>
</dbReference>
<dbReference type="GO" id="GO:0000050">
    <property type="term" value="P:urea cycle"/>
    <property type="evidence" value="ECO:0007669"/>
    <property type="project" value="TreeGrafter"/>
</dbReference>
<dbReference type="CDD" id="cd01999">
    <property type="entry name" value="ASS"/>
    <property type="match status" value="1"/>
</dbReference>
<dbReference type="FunFam" id="1.20.5.470:FF:000002">
    <property type="entry name" value="Argininosuccinate synthase"/>
    <property type="match status" value="1"/>
</dbReference>
<dbReference type="FunFam" id="3.40.50.620:FF:000038">
    <property type="entry name" value="Argininosuccinate synthase"/>
    <property type="match status" value="1"/>
</dbReference>
<dbReference type="FunFam" id="3.90.1260.10:FF:000007">
    <property type="entry name" value="Argininosuccinate synthase"/>
    <property type="match status" value="1"/>
</dbReference>
<dbReference type="Gene3D" id="3.90.1260.10">
    <property type="entry name" value="Argininosuccinate synthetase, chain A, domain 2"/>
    <property type="match status" value="1"/>
</dbReference>
<dbReference type="Gene3D" id="3.40.50.620">
    <property type="entry name" value="HUPs"/>
    <property type="match status" value="1"/>
</dbReference>
<dbReference type="Gene3D" id="1.20.5.470">
    <property type="entry name" value="Single helix bin"/>
    <property type="match status" value="1"/>
</dbReference>
<dbReference type="HAMAP" id="MF_00005">
    <property type="entry name" value="Arg_succ_synth_type1"/>
    <property type="match status" value="1"/>
</dbReference>
<dbReference type="InterPro" id="IPR048268">
    <property type="entry name" value="Arginosuc_syn_C"/>
</dbReference>
<dbReference type="InterPro" id="IPR048267">
    <property type="entry name" value="Arginosuc_syn_N"/>
</dbReference>
<dbReference type="InterPro" id="IPR001518">
    <property type="entry name" value="Arginosuc_synth"/>
</dbReference>
<dbReference type="InterPro" id="IPR018223">
    <property type="entry name" value="Arginosuc_synth_CS"/>
</dbReference>
<dbReference type="InterPro" id="IPR023434">
    <property type="entry name" value="Arginosuc_synth_type_1_subfam"/>
</dbReference>
<dbReference type="InterPro" id="IPR024074">
    <property type="entry name" value="AS_cat/multimer_dom_body"/>
</dbReference>
<dbReference type="InterPro" id="IPR014729">
    <property type="entry name" value="Rossmann-like_a/b/a_fold"/>
</dbReference>
<dbReference type="NCBIfam" id="TIGR00032">
    <property type="entry name" value="argG"/>
    <property type="match status" value="1"/>
</dbReference>
<dbReference type="NCBIfam" id="NF001770">
    <property type="entry name" value="PRK00509.1"/>
    <property type="match status" value="1"/>
</dbReference>
<dbReference type="PANTHER" id="PTHR11587">
    <property type="entry name" value="ARGININOSUCCINATE SYNTHASE"/>
    <property type="match status" value="1"/>
</dbReference>
<dbReference type="PANTHER" id="PTHR11587:SF2">
    <property type="entry name" value="ARGININOSUCCINATE SYNTHASE"/>
    <property type="match status" value="1"/>
</dbReference>
<dbReference type="Pfam" id="PF20979">
    <property type="entry name" value="Arginosuc_syn_C"/>
    <property type="match status" value="1"/>
</dbReference>
<dbReference type="Pfam" id="PF00764">
    <property type="entry name" value="Arginosuc_synth"/>
    <property type="match status" value="1"/>
</dbReference>
<dbReference type="SUPFAM" id="SSF52402">
    <property type="entry name" value="Adenine nucleotide alpha hydrolases-like"/>
    <property type="match status" value="1"/>
</dbReference>
<dbReference type="SUPFAM" id="SSF69864">
    <property type="entry name" value="Argininosuccinate synthetase, C-terminal domain"/>
    <property type="match status" value="1"/>
</dbReference>
<dbReference type="PROSITE" id="PS00564">
    <property type="entry name" value="ARGININOSUCCIN_SYN_1"/>
    <property type="match status" value="1"/>
</dbReference>
<dbReference type="PROSITE" id="PS00565">
    <property type="entry name" value="ARGININOSUCCIN_SYN_2"/>
    <property type="match status" value="1"/>
</dbReference>
<protein>
    <recommendedName>
        <fullName evidence="1">Argininosuccinate synthase</fullName>
        <ecNumber evidence="1">6.3.4.5</ecNumber>
    </recommendedName>
    <alternativeName>
        <fullName evidence="1">Citrulline--aspartate ligase</fullName>
    </alternativeName>
</protein>
<accession>Q8CWZ0</accession>
<proteinExistence type="inferred from homology"/>
<gene>
    <name evidence="1" type="primary">argG</name>
    <name type="ordered locus">SMU_334</name>
</gene>
<comment type="catalytic activity">
    <reaction evidence="1">
        <text>L-citrulline + L-aspartate + ATP = 2-(N(omega)-L-arginino)succinate + AMP + diphosphate + H(+)</text>
        <dbReference type="Rhea" id="RHEA:10932"/>
        <dbReference type="ChEBI" id="CHEBI:15378"/>
        <dbReference type="ChEBI" id="CHEBI:29991"/>
        <dbReference type="ChEBI" id="CHEBI:30616"/>
        <dbReference type="ChEBI" id="CHEBI:33019"/>
        <dbReference type="ChEBI" id="CHEBI:57472"/>
        <dbReference type="ChEBI" id="CHEBI:57743"/>
        <dbReference type="ChEBI" id="CHEBI:456215"/>
        <dbReference type="EC" id="6.3.4.5"/>
    </reaction>
</comment>
<comment type="pathway">
    <text evidence="1">Amino-acid biosynthesis; L-arginine biosynthesis; L-arginine from L-ornithine and carbamoyl phosphate: step 2/3.</text>
</comment>
<comment type="subunit">
    <text evidence="1">Homotetramer.</text>
</comment>
<comment type="subcellular location">
    <subcellularLocation>
        <location evidence="1">Cytoplasm</location>
    </subcellularLocation>
</comment>
<comment type="similarity">
    <text evidence="1">Belongs to the argininosuccinate synthase family. Type 1 subfamily.</text>
</comment>
<organism>
    <name type="scientific">Streptococcus mutans serotype c (strain ATCC 700610 / UA159)</name>
    <dbReference type="NCBI Taxonomy" id="210007"/>
    <lineage>
        <taxon>Bacteria</taxon>
        <taxon>Bacillati</taxon>
        <taxon>Bacillota</taxon>
        <taxon>Bacilli</taxon>
        <taxon>Lactobacillales</taxon>
        <taxon>Streptococcaceae</taxon>
        <taxon>Streptococcus</taxon>
    </lineage>
</organism>
<name>ASSY_STRMU</name>
<evidence type="ECO:0000255" key="1">
    <source>
        <dbReference type="HAMAP-Rule" id="MF_00005"/>
    </source>
</evidence>
<sequence length="396" mass="43913">MSKEKVILAYSGGLDTSVAITWLKKDYDVVAVCMDVGEGKDLEFIHDKALKVGAIESYVLDIKDEFAEEYVLPALQAHAYYEQKYPLVSALSRPVISKKLVEIAHQTGATTIAHGCTGKGNDQVRFEVAIAALDPKLKVIAPVREWKWSREEEINYAKENGVPVPADLDNPYSVDQNLWGRANECGVLENPWNQAPEEAFGITNSVEEAPDKAEYVDITFKEGKPVALDGQEMKLADLIQKLNVLAGKHGVGRIDHVENRLVGIKSREIYECPGAVTLLTAHKEIEDITLVREVSHFKPILENELSNLIYNALWFNPATQAILAYITETQKEVNGTAKVKLYKGSARVVARKSPHSLYDENLATYTSADSFDQDAAVGFIKLWGLPTQVNSQVNNK</sequence>